<protein>
    <recommendedName>
        <fullName evidence="1">Type III pantothenate kinase</fullName>
        <ecNumber evidence="1">2.7.1.33</ecNumber>
    </recommendedName>
    <alternativeName>
        <fullName evidence="1">PanK-III</fullName>
    </alternativeName>
    <alternativeName>
        <fullName evidence="1">Pantothenic acid kinase</fullName>
    </alternativeName>
</protein>
<comment type="function">
    <text evidence="1">Catalyzes the phosphorylation of pantothenate (Pan), the first step in CoA biosynthesis.</text>
</comment>
<comment type="catalytic activity">
    <reaction evidence="1">
        <text>(R)-pantothenate + ATP = (R)-4'-phosphopantothenate + ADP + H(+)</text>
        <dbReference type="Rhea" id="RHEA:16373"/>
        <dbReference type="ChEBI" id="CHEBI:10986"/>
        <dbReference type="ChEBI" id="CHEBI:15378"/>
        <dbReference type="ChEBI" id="CHEBI:29032"/>
        <dbReference type="ChEBI" id="CHEBI:30616"/>
        <dbReference type="ChEBI" id="CHEBI:456216"/>
        <dbReference type="EC" id="2.7.1.33"/>
    </reaction>
</comment>
<comment type="cofactor">
    <cofactor evidence="1">
        <name>NH4(+)</name>
        <dbReference type="ChEBI" id="CHEBI:28938"/>
    </cofactor>
    <cofactor evidence="1">
        <name>K(+)</name>
        <dbReference type="ChEBI" id="CHEBI:29103"/>
    </cofactor>
    <text evidence="1">A monovalent cation. Ammonium or potassium.</text>
</comment>
<comment type="pathway">
    <text evidence="1">Cofactor biosynthesis; coenzyme A biosynthesis; CoA from (R)-pantothenate: step 1/5.</text>
</comment>
<comment type="subunit">
    <text evidence="1">Homodimer.</text>
</comment>
<comment type="subcellular location">
    <subcellularLocation>
        <location evidence="1">Cytoplasm</location>
    </subcellularLocation>
</comment>
<comment type="similarity">
    <text evidence="1">Belongs to the type III pantothenate kinase family.</text>
</comment>
<reference key="1">
    <citation type="submission" date="2008-08" db="EMBL/GenBank/DDBJ databases">
        <title>Complete sequence of Anaeromyxobacter sp. K.</title>
        <authorList>
            <consortium name="US DOE Joint Genome Institute"/>
            <person name="Lucas S."/>
            <person name="Copeland A."/>
            <person name="Lapidus A."/>
            <person name="Glavina del Rio T."/>
            <person name="Dalin E."/>
            <person name="Tice H."/>
            <person name="Bruce D."/>
            <person name="Goodwin L."/>
            <person name="Pitluck S."/>
            <person name="Saunders E."/>
            <person name="Brettin T."/>
            <person name="Detter J.C."/>
            <person name="Han C."/>
            <person name="Larimer F."/>
            <person name="Land M."/>
            <person name="Hauser L."/>
            <person name="Kyrpides N."/>
            <person name="Ovchinnikiva G."/>
            <person name="Beliaev A."/>
        </authorList>
    </citation>
    <scope>NUCLEOTIDE SEQUENCE [LARGE SCALE GENOMIC DNA]</scope>
    <source>
        <strain>K</strain>
    </source>
</reference>
<organism>
    <name type="scientific">Anaeromyxobacter sp. (strain K)</name>
    <dbReference type="NCBI Taxonomy" id="447217"/>
    <lineage>
        <taxon>Bacteria</taxon>
        <taxon>Pseudomonadati</taxon>
        <taxon>Myxococcota</taxon>
        <taxon>Myxococcia</taxon>
        <taxon>Myxococcales</taxon>
        <taxon>Cystobacterineae</taxon>
        <taxon>Anaeromyxobacteraceae</taxon>
        <taxon>Anaeromyxobacter</taxon>
    </lineage>
</organism>
<dbReference type="EC" id="2.7.1.33" evidence="1"/>
<dbReference type="EMBL" id="CP001131">
    <property type="protein sequence ID" value="ACG72708.1"/>
    <property type="molecule type" value="Genomic_DNA"/>
</dbReference>
<dbReference type="RefSeq" id="WP_012525528.1">
    <property type="nucleotide sequence ID" value="NC_011145.1"/>
</dbReference>
<dbReference type="SMR" id="B4UJZ9"/>
<dbReference type="KEGG" id="ank:AnaeK_1477"/>
<dbReference type="HOGENOM" id="CLU_066627_1_0_7"/>
<dbReference type="OrthoDB" id="9804707at2"/>
<dbReference type="UniPathway" id="UPA00241">
    <property type="reaction ID" value="UER00352"/>
</dbReference>
<dbReference type="Proteomes" id="UP000001871">
    <property type="component" value="Chromosome"/>
</dbReference>
<dbReference type="GO" id="GO:0005737">
    <property type="term" value="C:cytoplasm"/>
    <property type="evidence" value="ECO:0007669"/>
    <property type="project" value="UniProtKB-SubCell"/>
</dbReference>
<dbReference type="GO" id="GO:0005524">
    <property type="term" value="F:ATP binding"/>
    <property type="evidence" value="ECO:0007669"/>
    <property type="project" value="UniProtKB-UniRule"/>
</dbReference>
<dbReference type="GO" id="GO:0046872">
    <property type="term" value="F:metal ion binding"/>
    <property type="evidence" value="ECO:0007669"/>
    <property type="project" value="UniProtKB-KW"/>
</dbReference>
<dbReference type="GO" id="GO:0004594">
    <property type="term" value="F:pantothenate kinase activity"/>
    <property type="evidence" value="ECO:0007669"/>
    <property type="project" value="UniProtKB-UniRule"/>
</dbReference>
<dbReference type="GO" id="GO:0015937">
    <property type="term" value="P:coenzyme A biosynthetic process"/>
    <property type="evidence" value="ECO:0007669"/>
    <property type="project" value="UniProtKB-UniRule"/>
</dbReference>
<dbReference type="CDD" id="cd24015">
    <property type="entry name" value="ASKHA_NBD_PanK-III"/>
    <property type="match status" value="1"/>
</dbReference>
<dbReference type="Gene3D" id="3.30.420.40">
    <property type="match status" value="2"/>
</dbReference>
<dbReference type="HAMAP" id="MF_01274">
    <property type="entry name" value="Pantothen_kinase_3"/>
    <property type="match status" value="1"/>
</dbReference>
<dbReference type="InterPro" id="IPR043129">
    <property type="entry name" value="ATPase_NBD"/>
</dbReference>
<dbReference type="InterPro" id="IPR004619">
    <property type="entry name" value="Type_III_PanK"/>
</dbReference>
<dbReference type="NCBIfam" id="TIGR00671">
    <property type="entry name" value="baf"/>
    <property type="match status" value="1"/>
</dbReference>
<dbReference type="NCBIfam" id="NF009848">
    <property type="entry name" value="PRK13318.1-6"/>
    <property type="match status" value="1"/>
</dbReference>
<dbReference type="NCBIfam" id="NF009855">
    <property type="entry name" value="PRK13321.1"/>
    <property type="match status" value="1"/>
</dbReference>
<dbReference type="PANTHER" id="PTHR34265">
    <property type="entry name" value="TYPE III PANTOTHENATE KINASE"/>
    <property type="match status" value="1"/>
</dbReference>
<dbReference type="PANTHER" id="PTHR34265:SF1">
    <property type="entry name" value="TYPE III PANTOTHENATE KINASE"/>
    <property type="match status" value="1"/>
</dbReference>
<dbReference type="Pfam" id="PF03309">
    <property type="entry name" value="Pan_kinase"/>
    <property type="match status" value="1"/>
</dbReference>
<dbReference type="SUPFAM" id="SSF53067">
    <property type="entry name" value="Actin-like ATPase domain"/>
    <property type="match status" value="2"/>
</dbReference>
<proteinExistence type="inferred from homology"/>
<keyword id="KW-0067">ATP-binding</keyword>
<keyword id="KW-0173">Coenzyme A biosynthesis</keyword>
<keyword id="KW-0963">Cytoplasm</keyword>
<keyword id="KW-0418">Kinase</keyword>
<keyword id="KW-0479">Metal-binding</keyword>
<keyword id="KW-0547">Nucleotide-binding</keyword>
<keyword id="KW-0630">Potassium</keyword>
<keyword id="KW-0808">Transferase</keyword>
<accession>B4UJZ9</accession>
<evidence type="ECO:0000255" key="1">
    <source>
        <dbReference type="HAMAP-Rule" id="MF_01274"/>
    </source>
</evidence>
<feature type="chain" id="PRO_1000140216" description="Type III pantothenate kinase">
    <location>
        <begin position="1"/>
        <end position="254"/>
    </location>
</feature>
<feature type="active site" description="Proton acceptor" evidence="1">
    <location>
        <position position="109"/>
    </location>
</feature>
<feature type="binding site" evidence="1">
    <location>
        <begin position="6"/>
        <end position="13"/>
    </location>
    <ligand>
        <name>ATP</name>
        <dbReference type="ChEBI" id="CHEBI:30616"/>
    </ligand>
</feature>
<feature type="binding site" evidence="1">
    <location>
        <position position="100"/>
    </location>
    <ligand>
        <name>substrate</name>
    </ligand>
</feature>
<feature type="binding site" evidence="1">
    <location>
        <begin position="107"/>
        <end position="110"/>
    </location>
    <ligand>
        <name>substrate</name>
    </ligand>
</feature>
<feature type="binding site" evidence="1">
    <location>
        <position position="129"/>
    </location>
    <ligand>
        <name>K(+)</name>
        <dbReference type="ChEBI" id="CHEBI:29103"/>
    </ligand>
</feature>
<feature type="binding site" evidence="1">
    <location>
        <position position="132"/>
    </location>
    <ligand>
        <name>ATP</name>
        <dbReference type="ChEBI" id="CHEBI:30616"/>
    </ligand>
</feature>
<feature type="binding site" evidence="1">
    <location>
        <position position="184"/>
    </location>
    <ligand>
        <name>substrate</name>
    </ligand>
</feature>
<name>COAX_ANASK</name>
<sequence length="254" mass="27247">MLLAIDVGNTNTTLGVYDGAVLRRHWRVETSHTRTYDEYGILLRQLFASAGLEPARVSAVVIASVVPPLAFTLEQMCVRYFDRKPMFVGPGMKTGMPILYENPREVGADRVVNAVAAYERWRCALVVVDFGTATTFDVISAKGEYLGGAICPGIGISMDALARSASKLPRVEFAKPPSVVGKNTVASIQAGLVYGYVGMVDGICAQIAAELATPPKVVATGGLAPLIAGVSRSITEVDEHLTLEGLRILHERNR</sequence>
<gene>
    <name evidence="1" type="primary">coaX</name>
    <name type="ordered locus">AnaeK_1477</name>
</gene>